<keyword id="KW-0687">Ribonucleoprotein</keyword>
<keyword id="KW-0689">Ribosomal protein</keyword>
<accession>Q31G43</accession>
<proteinExistence type="inferred from homology"/>
<dbReference type="EMBL" id="CP000109">
    <property type="protein sequence ID" value="ABB41880.1"/>
    <property type="status" value="ALT_INIT"/>
    <property type="molecule type" value="Genomic_DNA"/>
</dbReference>
<dbReference type="SMR" id="Q31G43"/>
<dbReference type="STRING" id="317025.Tcr_1285"/>
<dbReference type="KEGG" id="tcx:Tcr_1285"/>
<dbReference type="eggNOG" id="COG0052">
    <property type="taxonomic scope" value="Bacteria"/>
</dbReference>
<dbReference type="HOGENOM" id="CLU_040318_2_3_6"/>
<dbReference type="OrthoDB" id="9808036at2"/>
<dbReference type="GO" id="GO:0022627">
    <property type="term" value="C:cytosolic small ribosomal subunit"/>
    <property type="evidence" value="ECO:0007669"/>
    <property type="project" value="TreeGrafter"/>
</dbReference>
<dbReference type="GO" id="GO:0003735">
    <property type="term" value="F:structural constituent of ribosome"/>
    <property type="evidence" value="ECO:0007669"/>
    <property type="project" value="InterPro"/>
</dbReference>
<dbReference type="GO" id="GO:0006412">
    <property type="term" value="P:translation"/>
    <property type="evidence" value="ECO:0007669"/>
    <property type="project" value="UniProtKB-UniRule"/>
</dbReference>
<dbReference type="CDD" id="cd01425">
    <property type="entry name" value="RPS2"/>
    <property type="match status" value="1"/>
</dbReference>
<dbReference type="FunFam" id="1.10.287.610:FF:000001">
    <property type="entry name" value="30S ribosomal protein S2"/>
    <property type="match status" value="1"/>
</dbReference>
<dbReference type="Gene3D" id="3.40.50.10490">
    <property type="entry name" value="Glucose-6-phosphate isomerase like protein, domain 1"/>
    <property type="match status" value="1"/>
</dbReference>
<dbReference type="Gene3D" id="1.10.287.610">
    <property type="entry name" value="Helix hairpin bin"/>
    <property type="match status" value="1"/>
</dbReference>
<dbReference type="HAMAP" id="MF_00291_B">
    <property type="entry name" value="Ribosomal_uS2_B"/>
    <property type="match status" value="1"/>
</dbReference>
<dbReference type="InterPro" id="IPR001865">
    <property type="entry name" value="Ribosomal_uS2"/>
</dbReference>
<dbReference type="InterPro" id="IPR005706">
    <property type="entry name" value="Ribosomal_uS2_bac/mit/plastid"/>
</dbReference>
<dbReference type="InterPro" id="IPR018130">
    <property type="entry name" value="Ribosomal_uS2_CS"/>
</dbReference>
<dbReference type="InterPro" id="IPR023591">
    <property type="entry name" value="Ribosomal_uS2_flav_dom_sf"/>
</dbReference>
<dbReference type="NCBIfam" id="TIGR01011">
    <property type="entry name" value="rpsB_bact"/>
    <property type="match status" value="1"/>
</dbReference>
<dbReference type="PANTHER" id="PTHR12534">
    <property type="entry name" value="30S RIBOSOMAL PROTEIN S2 PROKARYOTIC AND ORGANELLAR"/>
    <property type="match status" value="1"/>
</dbReference>
<dbReference type="PANTHER" id="PTHR12534:SF0">
    <property type="entry name" value="SMALL RIBOSOMAL SUBUNIT PROTEIN US2M"/>
    <property type="match status" value="1"/>
</dbReference>
<dbReference type="Pfam" id="PF00318">
    <property type="entry name" value="Ribosomal_S2"/>
    <property type="match status" value="1"/>
</dbReference>
<dbReference type="PRINTS" id="PR00395">
    <property type="entry name" value="RIBOSOMALS2"/>
</dbReference>
<dbReference type="SUPFAM" id="SSF52313">
    <property type="entry name" value="Ribosomal protein S2"/>
    <property type="match status" value="1"/>
</dbReference>
<dbReference type="PROSITE" id="PS00962">
    <property type="entry name" value="RIBOSOMAL_S2_1"/>
    <property type="match status" value="1"/>
</dbReference>
<dbReference type="PROSITE" id="PS00963">
    <property type="entry name" value="RIBOSOMAL_S2_2"/>
    <property type="match status" value="1"/>
</dbReference>
<name>RS2_HYDCU</name>
<organism>
    <name type="scientific">Hydrogenovibrio crunogenus (strain DSM 25203 / XCL-2)</name>
    <name type="common">Thiomicrospira crunogena</name>
    <dbReference type="NCBI Taxonomy" id="317025"/>
    <lineage>
        <taxon>Bacteria</taxon>
        <taxon>Pseudomonadati</taxon>
        <taxon>Pseudomonadota</taxon>
        <taxon>Gammaproteobacteria</taxon>
        <taxon>Thiotrichales</taxon>
        <taxon>Piscirickettsiaceae</taxon>
        <taxon>Hydrogenovibrio</taxon>
    </lineage>
</organism>
<gene>
    <name evidence="1" type="primary">rpsB</name>
    <name type="ordered locus">Tcr_1285</name>
</gene>
<evidence type="ECO:0000255" key="1">
    <source>
        <dbReference type="HAMAP-Rule" id="MF_00291"/>
    </source>
</evidence>
<evidence type="ECO:0000305" key="2"/>
<sequence length="244" mass="26770">MAKVTMRQMLEAGVHFGHQTRYWNPKMGEYIFGARNKIHIVNLEKTLPMFNDALNFLGGIAAKKGTVLFVGTKRAAGDLVAQEAKRCGMPYVNHRWLGGMLTNFKTIKQSIKNLKDLEVQEQDGTFEKITKKEALMRSRQKAKLELSLGGIKDMRAMPDAIFIIDTGNEKIAIQEAKNLGIPVVGVVDTNNDPNGVDYVIPGNDDAVRAVSLYLSAAADAINEGKGSITTAVEGDEFVEEKAEA</sequence>
<protein>
    <recommendedName>
        <fullName evidence="1">Small ribosomal subunit protein uS2</fullName>
    </recommendedName>
    <alternativeName>
        <fullName evidence="2">30S ribosomal protein S2</fullName>
    </alternativeName>
</protein>
<feature type="chain" id="PRO_0000352047" description="Small ribosomal subunit protein uS2">
    <location>
        <begin position="1"/>
        <end position="244"/>
    </location>
</feature>
<comment type="similarity">
    <text evidence="1">Belongs to the universal ribosomal protein uS2 family.</text>
</comment>
<comment type="sequence caution" evidence="2">
    <conflict type="erroneous initiation">
        <sequence resource="EMBL-CDS" id="ABB41880"/>
    </conflict>
</comment>
<reference key="1">
    <citation type="journal article" date="2006" name="PLoS Biol.">
        <title>The genome of deep-sea vent chemolithoautotroph Thiomicrospira crunogena XCL-2.</title>
        <authorList>
            <person name="Scott K.M."/>
            <person name="Sievert S.M."/>
            <person name="Abril F.N."/>
            <person name="Ball L.A."/>
            <person name="Barrett C.J."/>
            <person name="Blake R.A."/>
            <person name="Boller A.J."/>
            <person name="Chain P.S.G."/>
            <person name="Clark J.A."/>
            <person name="Davis C.R."/>
            <person name="Detter C."/>
            <person name="Do K.F."/>
            <person name="Dobrinski K.P."/>
            <person name="Faza B.I."/>
            <person name="Fitzpatrick K.A."/>
            <person name="Freyermuth S.K."/>
            <person name="Harmer T.L."/>
            <person name="Hauser L.J."/>
            <person name="Huegler M."/>
            <person name="Kerfeld C.A."/>
            <person name="Klotz M.G."/>
            <person name="Kong W.W."/>
            <person name="Land M."/>
            <person name="Lapidus A."/>
            <person name="Larimer F.W."/>
            <person name="Longo D.L."/>
            <person name="Lucas S."/>
            <person name="Malfatti S.A."/>
            <person name="Massey S.E."/>
            <person name="Martin D.D."/>
            <person name="McCuddin Z."/>
            <person name="Meyer F."/>
            <person name="Moore J.L."/>
            <person name="Ocampo L.H. Jr."/>
            <person name="Paul J.H."/>
            <person name="Paulsen I.T."/>
            <person name="Reep D.K."/>
            <person name="Ren Q."/>
            <person name="Ross R.L."/>
            <person name="Sato P.Y."/>
            <person name="Thomas P."/>
            <person name="Tinkham L.E."/>
            <person name="Zeruth G.T."/>
        </authorList>
    </citation>
    <scope>NUCLEOTIDE SEQUENCE [LARGE SCALE GENOMIC DNA]</scope>
    <source>
        <strain>DSM 25203 / XCL-2</strain>
    </source>
</reference>